<gene>
    <name evidence="1" type="primary">nadE</name>
    <name type="ordered locus">Clos_1779</name>
</gene>
<name>NADE_ALKOO</name>
<evidence type="ECO:0000255" key="1">
    <source>
        <dbReference type="HAMAP-Rule" id="MF_00193"/>
    </source>
</evidence>
<feature type="chain" id="PRO_1000077530" description="NH(3)-dependent NAD(+) synthetase">
    <location>
        <begin position="1"/>
        <end position="250"/>
    </location>
</feature>
<feature type="binding site" evidence="1">
    <location>
        <begin position="31"/>
        <end position="38"/>
    </location>
    <ligand>
        <name>ATP</name>
        <dbReference type="ChEBI" id="CHEBI:30616"/>
    </ligand>
</feature>
<feature type="binding site" evidence="1">
    <location>
        <position position="37"/>
    </location>
    <ligand>
        <name>Mg(2+)</name>
        <dbReference type="ChEBI" id="CHEBI:18420"/>
    </ligand>
</feature>
<feature type="binding site" evidence="1">
    <location>
        <position position="122"/>
    </location>
    <ligand>
        <name>deamido-NAD(+)</name>
        <dbReference type="ChEBI" id="CHEBI:58437"/>
    </ligand>
</feature>
<feature type="binding site" evidence="1">
    <location>
        <position position="142"/>
    </location>
    <ligand>
        <name>ATP</name>
        <dbReference type="ChEBI" id="CHEBI:30616"/>
    </ligand>
</feature>
<feature type="binding site" evidence="1">
    <location>
        <position position="147"/>
    </location>
    <ligand>
        <name>Mg(2+)</name>
        <dbReference type="ChEBI" id="CHEBI:18420"/>
    </ligand>
</feature>
<feature type="binding site" evidence="1">
    <location>
        <position position="155"/>
    </location>
    <ligand>
        <name>deamido-NAD(+)</name>
        <dbReference type="ChEBI" id="CHEBI:58437"/>
    </ligand>
</feature>
<feature type="binding site" evidence="1">
    <location>
        <position position="162"/>
    </location>
    <ligand>
        <name>deamido-NAD(+)</name>
        <dbReference type="ChEBI" id="CHEBI:58437"/>
    </ligand>
</feature>
<feature type="binding site" evidence="1">
    <location>
        <position position="171"/>
    </location>
    <ligand>
        <name>ATP</name>
        <dbReference type="ChEBI" id="CHEBI:30616"/>
    </ligand>
</feature>
<feature type="binding site" evidence="1">
    <location>
        <position position="193"/>
    </location>
    <ligand>
        <name>ATP</name>
        <dbReference type="ChEBI" id="CHEBI:30616"/>
    </ligand>
</feature>
<feature type="binding site" evidence="1">
    <location>
        <begin position="239"/>
        <end position="240"/>
    </location>
    <ligand>
        <name>deamido-NAD(+)</name>
        <dbReference type="ChEBI" id="CHEBI:58437"/>
    </ligand>
</feature>
<reference key="1">
    <citation type="submission" date="2007-10" db="EMBL/GenBank/DDBJ databases">
        <title>Complete genome of Alkaliphilus oremlandii OhILAs.</title>
        <authorList>
            <person name="Copeland A."/>
            <person name="Lucas S."/>
            <person name="Lapidus A."/>
            <person name="Barry K."/>
            <person name="Detter J.C."/>
            <person name="Glavina del Rio T."/>
            <person name="Hammon N."/>
            <person name="Israni S."/>
            <person name="Dalin E."/>
            <person name="Tice H."/>
            <person name="Pitluck S."/>
            <person name="Chain P."/>
            <person name="Malfatti S."/>
            <person name="Shin M."/>
            <person name="Vergez L."/>
            <person name="Schmutz J."/>
            <person name="Larimer F."/>
            <person name="Land M."/>
            <person name="Hauser L."/>
            <person name="Kyrpides N."/>
            <person name="Mikhailova N."/>
            <person name="Stolz J.F."/>
            <person name="Dawson A."/>
            <person name="Fisher E."/>
            <person name="Crable B."/>
            <person name="Perera E."/>
            <person name="Lisak J."/>
            <person name="Ranganathan M."/>
            <person name="Basu P."/>
            <person name="Richardson P."/>
        </authorList>
    </citation>
    <scope>NUCLEOTIDE SEQUENCE [LARGE SCALE GENOMIC DNA]</scope>
    <source>
        <strain>OhILAs</strain>
    </source>
</reference>
<accession>A8MHN7</accession>
<organism>
    <name type="scientific">Alkaliphilus oremlandii (strain OhILAs)</name>
    <name type="common">Clostridium oremlandii (strain OhILAs)</name>
    <dbReference type="NCBI Taxonomy" id="350688"/>
    <lineage>
        <taxon>Bacteria</taxon>
        <taxon>Bacillati</taxon>
        <taxon>Bacillota</taxon>
        <taxon>Clostridia</taxon>
        <taxon>Peptostreptococcales</taxon>
        <taxon>Natronincolaceae</taxon>
        <taxon>Alkaliphilus</taxon>
    </lineage>
</organism>
<dbReference type="EC" id="6.3.1.5" evidence="1"/>
<dbReference type="EMBL" id="CP000853">
    <property type="protein sequence ID" value="ABW19319.1"/>
    <property type="molecule type" value="Genomic_DNA"/>
</dbReference>
<dbReference type="RefSeq" id="WP_012159631.1">
    <property type="nucleotide sequence ID" value="NC_009922.1"/>
</dbReference>
<dbReference type="SMR" id="A8MHN7"/>
<dbReference type="STRING" id="350688.Clos_1779"/>
<dbReference type="KEGG" id="aoe:Clos_1779"/>
<dbReference type="eggNOG" id="COG0171">
    <property type="taxonomic scope" value="Bacteria"/>
</dbReference>
<dbReference type="HOGENOM" id="CLU_059327_1_1_9"/>
<dbReference type="OrthoDB" id="9803818at2"/>
<dbReference type="UniPathway" id="UPA00253">
    <property type="reaction ID" value="UER00333"/>
</dbReference>
<dbReference type="Proteomes" id="UP000000269">
    <property type="component" value="Chromosome"/>
</dbReference>
<dbReference type="GO" id="GO:0005737">
    <property type="term" value="C:cytoplasm"/>
    <property type="evidence" value="ECO:0007669"/>
    <property type="project" value="InterPro"/>
</dbReference>
<dbReference type="GO" id="GO:0005524">
    <property type="term" value="F:ATP binding"/>
    <property type="evidence" value="ECO:0007669"/>
    <property type="project" value="UniProtKB-UniRule"/>
</dbReference>
<dbReference type="GO" id="GO:0004359">
    <property type="term" value="F:glutaminase activity"/>
    <property type="evidence" value="ECO:0007669"/>
    <property type="project" value="InterPro"/>
</dbReference>
<dbReference type="GO" id="GO:0046872">
    <property type="term" value="F:metal ion binding"/>
    <property type="evidence" value="ECO:0007669"/>
    <property type="project" value="UniProtKB-KW"/>
</dbReference>
<dbReference type="GO" id="GO:0003952">
    <property type="term" value="F:NAD+ synthase (glutamine-hydrolyzing) activity"/>
    <property type="evidence" value="ECO:0007669"/>
    <property type="project" value="InterPro"/>
</dbReference>
<dbReference type="GO" id="GO:0008795">
    <property type="term" value="F:NAD+ synthase activity"/>
    <property type="evidence" value="ECO:0007669"/>
    <property type="project" value="UniProtKB-UniRule"/>
</dbReference>
<dbReference type="GO" id="GO:0009435">
    <property type="term" value="P:NAD biosynthetic process"/>
    <property type="evidence" value="ECO:0007669"/>
    <property type="project" value="UniProtKB-UniRule"/>
</dbReference>
<dbReference type="CDD" id="cd00553">
    <property type="entry name" value="NAD_synthase"/>
    <property type="match status" value="1"/>
</dbReference>
<dbReference type="Gene3D" id="3.40.50.620">
    <property type="entry name" value="HUPs"/>
    <property type="match status" value="1"/>
</dbReference>
<dbReference type="HAMAP" id="MF_00193">
    <property type="entry name" value="NadE_ammonia_dep"/>
    <property type="match status" value="1"/>
</dbReference>
<dbReference type="InterPro" id="IPR022310">
    <property type="entry name" value="NAD/GMP_synthase"/>
</dbReference>
<dbReference type="InterPro" id="IPR003694">
    <property type="entry name" value="NAD_synthase"/>
</dbReference>
<dbReference type="InterPro" id="IPR022926">
    <property type="entry name" value="NH(3)-dep_NAD(+)_synth"/>
</dbReference>
<dbReference type="InterPro" id="IPR014729">
    <property type="entry name" value="Rossmann-like_a/b/a_fold"/>
</dbReference>
<dbReference type="NCBIfam" id="TIGR00552">
    <property type="entry name" value="nadE"/>
    <property type="match status" value="1"/>
</dbReference>
<dbReference type="PANTHER" id="PTHR23090:SF9">
    <property type="entry name" value="GLUTAMINE-DEPENDENT NAD(+) SYNTHETASE"/>
    <property type="match status" value="1"/>
</dbReference>
<dbReference type="PANTHER" id="PTHR23090">
    <property type="entry name" value="NH 3 /GLUTAMINE-DEPENDENT NAD + SYNTHETASE"/>
    <property type="match status" value="1"/>
</dbReference>
<dbReference type="Pfam" id="PF02540">
    <property type="entry name" value="NAD_synthase"/>
    <property type="match status" value="1"/>
</dbReference>
<dbReference type="SUPFAM" id="SSF52402">
    <property type="entry name" value="Adenine nucleotide alpha hydrolases-like"/>
    <property type="match status" value="1"/>
</dbReference>
<comment type="function">
    <text evidence="1">Catalyzes the ATP-dependent amidation of deamido-NAD to form NAD. Uses ammonia as a nitrogen source.</text>
</comment>
<comment type="catalytic activity">
    <reaction evidence="1">
        <text>deamido-NAD(+) + NH4(+) + ATP = AMP + diphosphate + NAD(+) + H(+)</text>
        <dbReference type="Rhea" id="RHEA:21188"/>
        <dbReference type="ChEBI" id="CHEBI:15378"/>
        <dbReference type="ChEBI" id="CHEBI:28938"/>
        <dbReference type="ChEBI" id="CHEBI:30616"/>
        <dbReference type="ChEBI" id="CHEBI:33019"/>
        <dbReference type="ChEBI" id="CHEBI:57540"/>
        <dbReference type="ChEBI" id="CHEBI:58437"/>
        <dbReference type="ChEBI" id="CHEBI:456215"/>
        <dbReference type="EC" id="6.3.1.5"/>
    </reaction>
</comment>
<comment type="pathway">
    <text evidence="1">Cofactor biosynthesis; NAD(+) biosynthesis; NAD(+) from deamido-NAD(+) (ammonia route): step 1/1.</text>
</comment>
<comment type="subunit">
    <text evidence="1">Homodimer.</text>
</comment>
<comment type="similarity">
    <text evidence="1">Belongs to the NAD synthetase family.</text>
</comment>
<keyword id="KW-0067">ATP-binding</keyword>
<keyword id="KW-0436">Ligase</keyword>
<keyword id="KW-0460">Magnesium</keyword>
<keyword id="KW-0479">Metal-binding</keyword>
<keyword id="KW-0520">NAD</keyword>
<keyword id="KW-0547">Nucleotide-binding</keyword>
<keyword id="KW-1185">Reference proteome</keyword>
<sequence length="250" mass="27596">MTQNIQKNIDQVVEWLREQVRNAGAKGLTVGISGGIDSAVVACLIKKAFPENSLGVILPIKSSTKDVEHGILTAEACGIEYIEIDLGEEHNTVANKVVHQLNNKNLFNTGMERAMDSNLRARLRMSTLYAVANNLNYLVVGTDNAAEIYTGYFTKYGDGGVDILPIASLKKYEVYEWAKVLGVPKEVLEKEPSAGLWEGQTDEGEMGTSYKYIDEFLEGKAIPEKDLTVIERLHRNSAHKRTMPPSPKIG</sequence>
<proteinExistence type="inferred from homology"/>
<protein>
    <recommendedName>
        <fullName evidence="1">NH(3)-dependent NAD(+) synthetase</fullName>
        <ecNumber evidence="1">6.3.1.5</ecNumber>
    </recommendedName>
</protein>